<proteinExistence type="inferred from homology"/>
<keyword id="KW-0067">ATP-binding</keyword>
<keyword id="KW-0093">Biotin biosynthesis</keyword>
<keyword id="KW-0963">Cytoplasm</keyword>
<keyword id="KW-0436">Ligase</keyword>
<keyword id="KW-0460">Magnesium</keyword>
<keyword id="KW-0479">Metal-binding</keyword>
<keyword id="KW-0547">Nucleotide-binding</keyword>
<accession>Q2W3K9</accession>
<comment type="function">
    <text evidence="1">Catalyzes a mechanistically unusual reaction, the ATP-dependent insertion of CO2 between the N7 and N8 nitrogen atoms of 7,8-diaminopelargonic acid (DAPA, also called 7,8-diammoniononanoate) to form a ureido ring.</text>
</comment>
<comment type="catalytic activity">
    <reaction evidence="1">
        <text>(7R,8S)-7,8-diammoniononanoate + CO2 + ATP = (4R,5S)-dethiobiotin + ADP + phosphate + 3 H(+)</text>
        <dbReference type="Rhea" id="RHEA:15805"/>
        <dbReference type="ChEBI" id="CHEBI:15378"/>
        <dbReference type="ChEBI" id="CHEBI:16526"/>
        <dbReference type="ChEBI" id="CHEBI:30616"/>
        <dbReference type="ChEBI" id="CHEBI:43474"/>
        <dbReference type="ChEBI" id="CHEBI:149469"/>
        <dbReference type="ChEBI" id="CHEBI:149473"/>
        <dbReference type="ChEBI" id="CHEBI:456216"/>
        <dbReference type="EC" id="6.3.3.3"/>
    </reaction>
</comment>
<comment type="cofactor">
    <cofactor evidence="1">
        <name>Mg(2+)</name>
        <dbReference type="ChEBI" id="CHEBI:18420"/>
    </cofactor>
</comment>
<comment type="pathway">
    <text evidence="1">Cofactor biosynthesis; biotin biosynthesis; biotin from 7,8-diaminononanoate: step 1/2.</text>
</comment>
<comment type="subunit">
    <text evidence="1">Homodimer.</text>
</comment>
<comment type="subcellular location">
    <subcellularLocation>
        <location evidence="1">Cytoplasm</location>
    </subcellularLocation>
</comment>
<comment type="similarity">
    <text evidence="1">Belongs to the dethiobiotin synthetase family.</text>
</comment>
<protein>
    <recommendedName>
        <fullName evidence="1">ATP-dependent dethiobiotin synthetase BioD</fullName>
        <ecNumber evidence="1">6.3.3.3</ecNumber>
    </recommendedName>
    <alternativeName>
        <fullName evidence="1">DTB synthetase</fullName>
        <shortName evidence="1">DTBS</shortName>
    </alternativeName>
    <alternativeName>
        <fullName evidence="1">Dethiobiotin synthase</fullName>
    </alternativeName>
</protein>
<feature type="chain" id="PRO_1000079274" description="ATP-dependent dethiobiotin synthetase BioD">
    <location>
        <begin position="1"/>
        <end position="205"/>
    </location>
</feature>
<feature type="active site" evidence="1">
    <location>
        <position position="32"/>
    </location>
</feature>
<feature type="binding site" evidence="1">
    <location>
        <position position="16"/>
    </location>
    <ligand>
        <name>Mg(2+)</name>
        <dbReference type="ChEBI" id="CHEBI:18420"/>
    </ligand>
</feature>
<feature type="binding site" evidence="1">
    <location>
        <position position="36"/>
    </location>
    <ligand>
        <name>substrate</name>
    </ligand>
</feature>
<feature type="binding site" evidence="1">
    <location>
        <begin position="97"/>
        <end position="100"/>
    </location>
    <ligand>
        <name>ATP</name>
        <dbReference type="ChEBI" id="CHEBI:30616"/>
    </ligand>
</feature>
<feature type="binding site" evidence="1">
    <location>
        <position position="97"/>
    </location>
    <ligand>
        <name>Mg(2+)</name>
        <dbReference type="ChEBI" id="CHEBI:18420"/>
    </ligand>
</feature>
<organism>
    <name type="scientific">Paramagnetospirillum magneticum (strain ATCC 700264 / AMB-1)</name>
    <name type="common">Magnetospirillum magneticum</name>
    <dbReference type="NCBI Taxonomy" id="342108"/>
    <lineage>
        <taxon>Bacteria</taxon>
        <taxon>Pseudomonadati</taxon>
        <taxon>Pseudomonadota</taxon>
        <taxon>Alphaproteobacteria</taxon>
        <taxon>Rhodospirillales</taxon>
        <taxon>Magnetospirillaceae</taxon>
        <taxon>Paramagnetospirillum</taxon>
    </lineage>
</organism>
<sequence length="205" mass="21998">MRGVFVTGTDTDVGKTMVSAWLAQHWRADYWKPIQTGSTEGTDFESVARLAPAARIHPSAVVLPAPLSPHEAARREKTRIDLSSLVPPVTDRPLVVEGAGGIMVPINEVALMIDLMERLSLPAVVVARSGLGTINHTLMTLEMLRRRRVPLLGVVMNGQKNPANRQAIEHFGGVRVLAEIQPLPAVTAATIAGLPPPTFTCPGDP</sequence>
<name>BIOD_PARM1</name>
<evidence type="ECO:0000255" key="1">
    <source>
        <dbReference type="HAMAP-Rule" id="MF_00336"/>
    </source>
</evidence>
<dbReference type="EC" id="6.3.3.3" evidence="1"/>
<dbReference type="EMBL" id="AP007255">
    <property type="protein sequence ID" value="BAE51566.1"/>
    <property type="molecule type" value="Genomic_DNA"/>
</dbReference>
<dbReference type="RefSeq" id="WP_011385141.1">
    <property type="nucleotide sequence ID" value="NC_007626.1"/>
</dbReference>
<dbReference type="SMR" id="Q2W3K9"/>
<dbReference type="STRING" id="342108.amb2762"/>
<dbReference type="KEGG" id="mag:amb2762"/>
<dbReference type="HOGENOM" id="CLU_072551_2_0_5"/>
<dbReference type="OrthoDB" id="9802097at2"/>
<dbReference type="UniPathway" id="UPA00078">
    <property type="reaction ID" value="UER00161"/>
</dbReference>
<dbReference type="Proteomes" id="UP000007058">
    <property type="component" value="Chromosome"/>
</dbReference>
<dbReference type="GO" id="GO:0005737">
    <property type="term" value="C:cytoplasm"/>
    <property type="evidence" value="ECO:0007669"/>
    <property type="project" value="UniProtKB-SubCell"/>
</dbReference>
<dbReference type="GO" id="GO:0005524">
    <property type="term" value="F:ATP binding"/>
    <property type="evidence" value="ECO:0007669"/>
    <property type="project" value="UniProtKB-UniRule"/>
</dbReference>
<dbReference type="GO" id="GO:0004141">
    <property type="term" value="F:dethiobiotin synthase activity"/>
    <property type="evidence" value="ECO:0007669"/>
    <property type="project" value="UniProtKB-UniRule"/>
</dbReference>
<dbReference type="GO" id="GO:0000287">
    <property type="term" value="F:magnesium ion binding"/>
    <property type="evidence" value="ECO:0007669"/>
    <property type="project" value="UniProtKB-UniRule"/>
</dbReference>
<dbReference type="GO" id="GO:0009102">
    <property type="term" value="P:biotin biosynthetic process"/>
    <property type="evidence" value="ECO:0007669"/>
    <property type="project" value="UniProtKB-UniRule"/>
</dbReference>
<dbReference type="CDD" id="cd03109">
    <property type="entry name" value="DTBS"/>
    <property type="match status" value="1"/>
</dbReference>
<dbReference type="Gene3D" id="3.40.50.300">
    <property type="entry name" value="P-loop containing nucleotide triphosphate hydrolases"/>
    <property type="match status" value="1"/>
</dbReference>
<dbReference type="HAMAP" id="MF_00336">
    <property type="entry name" value="BioD"/>
    <property type="match status" value="1"/>
</dbReference>
<dbReference type="InterPro" id="IPR004472">
    <property type="entry name" value="DTB_synth_BioD"/>
</dbReference>
<dbReference type="InterPro" id="IPR027417">
    <property type="entry name" value="P-loop_NTPase"/>
</dbReference>
<dbReference type="NCBIfam" id="TIGR00347">
    <property type="entry name" value="bioD"/>
    <property type="match status" value="1"/>
</dbReference>
<dbReference type="PANTHER" id="PTHR43210">
    <property type="entry name" value="DETHIOBIOTIN SYNTHETASE"/>
    <property type="match status" value="1"/>
</dbReference>
<dbReference type="PANTHER" id="PTHR43210:SF5">
    <property type="entry name" value="DETHIOBIOTIN SYNTHETASE"/>
    <property type="match status" value="1"/>
</dbReference>
<dbReference type="Pfam" id="PF13500">
    <property type="entry name" value="AAA_26"/>
    <property type="match status" value="1"/>
</dbReference>
<dbReference type="PIRSF" id="PIRSF006755">
    <property type="entry name" value="DTB_synth"/>
    <property type="match status" value="1"/>
</dbReference>
<dbReference type="SUPFAM" id="SSF52540">
    <property type="entry name" value="P-loop containing nucleoside triphosphate hydrolases"/>
    <property type="match status" value="1"/>
</dbReference>
<reference key="1">
    <citation type="journal article" date="2005" name="DNA Res.">
        <title>Complete genome sequence of the facultative anaerobic magnetotactic bacterium Magnetospirillum sp. strain AMB-1.</title>
        <authorList>
            <person name="Matsunaga T."/>
            <person name="Okamura Y."/>
            <person name="Fukuda Y."/>
            <person name="Wahyudi A.T."/>
            <person name="Murase Y."/>
            <person name="Takeyama H."/>
        </authorList>
    </citation>
    <scope>NUCLEOTIDE SEQUENCE [LARGE SCALE GENOMIC DNA]</scope>
    <source>
        <strain>ATCC 700264 / AMB-1</strain>
    </source>
</reference>
<gene>
    <name evidence="1" type="primary">bioD</name>
    <name type="ordered locus">amb2762</name>
</gene>